<evidence type="ECO:0000250" key="1">
    <source>
        <dbReference type="UniProtKB" id="P24941"/>
    </source>
</evidence>
<evidence type="ECO:0000255" key="2">
    <source>
        <dbReference type="PROSITE-ProRule" id="PRU00159"/>
    </source>
</evidence>
<evidence type="ECO:0000269" key="3">
    <source>
    </source>
</evidence>
<evidence type="ECO:0000269" key="4">
    <source>
    </source>
</evidence>
<evidence type="ECO:0000269" key="5">
    <source>
    </source>
</evidence>
<evidence type="ECO:0000269" key="6">
    <source>
    </source>
</evidence>
<evidence type="ECO:0000269" key="7">
    <source>
    </source>
</evidence>
<evidence type="ECO:0000269" key="8">
    <source>
    </source>
</evidence>
<evidence type="ECO:0000305" key="9"/>
<evidence type="ECO:0000305" key="10">
    <source>
    </source>
</evidence>
<evidence type="ECO:0000312" key="11">
    <source>
        <dbReference type="EMBL" id="AAD37121.1"/>
    </source>
</evidence>
<evidence type="ECO:0000312" key="12">
    <source>
        <dbReference type="Proteomes" id="UP000001940"/>
    </source>
</evidence>
<evidence type="ECO:0000312" key="13">
    <source>
        <dbReference type="WormBase" id="T27E9.3"/>
    </source>
</evidence>
<gene>
    <name evidence="13" type="primary">cdk-5</name>
    <name evidence="13" type="ORF">T27E9.3</name>
</gene>
<proteinExistence type="evidence at protein level"/>
<reference evidence="11" key="1">
    <citation type="journal article" date="1999" name="Development">
        <title>The Caenorhabditis elegans gene ncc-1 encodes a cdc2-related kinase required for M phase in meiotic and mitotic cell divisions, but not for S phase.</title>
        <authorList>
            <person name="Boxem M."/>
            <person name="Srinivasan D.G."/>
            <person name="van den Heuvel S."/>
        </authorList>
    </citation>
    <scope>NUCLEOTIDE SEQUENCE [MRNA]</scope>
    <source>
        <strain evidence="11">Bristol N2</strain>
    </source>
</reference>
<reference evidence="12" key="2">
    <citation type="journal article" date="1998" name="Science">
        <title>Genome sequence of the nematode C. elegans: a platform for investigating biology.</title>
        <authorList>
            <consortium name="The C. elegans sequencing consortium"/>
        </authorList>
    </citation>
    <scope>NUCLEOTIDE SEQUENCE [LARGE SCALE GENOMIC DNA]</scope>
    <source>
        <strain evidence="12">Bristol N2</strain>
    </source>
</reference>
<reference key="3">
    <citation type="journal article" date="2006" name="Brain Res.">
        <title>Genetic interactions among cortical malformation genes that influence susceptibility to convulsions in C. elegans.</title>
        <authorList>
            <person name="Locke C.J."/>
            <person name="Williams S.N."/>
            <person name="Schwarz E.M."/>
            <person name="Caldwell G.A."/>
            <person name="Caldwell K.A."/>
        </authorList>
    </citation>
    <scope>FUNCTION</scope>
    <scope>DISRUPTION PHENOTYPE</scope>
</reference>
<reference evidence="9" key="4">
    <citation type="journal article" date="2007" name="Mol. Biol. Cell">
        <title>CDK-5 regulates the abundance of GLR-1 glutamate receptors in the ventral cord of Caenorhabditis elegans.</title>
        <authorList>
            <person name="Juo P."/>
            <person name="Harbaugh T."/>
            <person name="Garriga G."/>
            <person name="Kaplan J.M."/>
        </authorList>
    </citation>
    <scope>FUNCTION</scope>
    <scope>DISRUPTION PHENOTYPE</scope>
    <scope>MUTAGENESIS OF LYS-33 AND ASP-144</scope>
</reference>
<reference evidence="9" key="5">
    <citation type="journal article" date="2010" name="Cell">
        <title>Two cyclin-dependent kinase pathways are essential for polarized trafficking of presynaptic components.</title>
        <authorList>
            <person name="Ou C.Y."/>
            <person name="Poon V.Y."/>
            <person name="Maeder C.I."/>
            <person name="Watanabe S."/>
            <person name="Lehrman E.K."/>
            <person name="Fu A.K."/>
            <person name="Park M."/>
            <person name="Fu W.Y."/>
            <person name="Jorgensen E.M."/>
            <person name="Ip N.Y."/>
            <person name="Shen K."/>
        </authorList>
    </citation>
    <scope>FUNCTION</scope>
    <scope>CATALYTIC ACTIVITY</scope>
    <scope>COFACTOR</scope>
    <scope>SUBCELLULAR LOCATION</scope>
</reference>
<reference evidence="9" key="6">
    <citation type="journal article" date="2011" name="Neuron">
        <title>CYY-1/cyclin Y and CDK-5 differentially regulate synapse elimination and formation for rewiring neural circuits.</title>
        <authorList>
            <person name="Park M."/>
            <person name="Watanabe S."/>
            <person name="Poon V.Y."/>
            <person name="Ou C.Y."/>
            <person name="Jorgensen E.M."/>
            <person name="Shen K."/>
        </authorList>
    </citation>
    <scope>FUNCTION</scope>
    <scope>DISRUPTION PHENOTYPE</scope>
</reference>
<reference evidence="9" key="7">
    <citation type="journal article" date="2012" name="EMBO J.">
        <title>Hypoxia regulates glutamate receptor trafficking through an HIF-independent mechanism.</title>
        <authorList>
            <person name="Park E.C."/>
            <person name="Ghose P."/>
            <person name="Shao Z."/>
            <person name="Ye Q."/>
            <person name="Kang L."/>
            <person name="Xu X.Z."/>
            <person name="Powell-Coffman J.A."/>
            <person name="Rongo C."/>
        </authorList>
    </citation>
    <scope>FUNCTION</scope>
</reference>
<reference evidence="9" key="8">
    <citation type="journal article" date="2012" name="J. Neurosci.">
        <title>Cyclin-dependent kinase 5 regulates the polarized trafficking of neuropeptide-containing dense-core vesicles in Caenorhabditis elegans motor neurons.</title>
        <authorList>
            <person name="Goodwin P.R."/>
            <person name="Sasaki J.M."/>
            <person name="Juo P."/>
        </authorList>
    </citation>
    <scope>FUNCTION</scope>
    <scope>DISRUPTION PHENOTYPE</scope>
</reference>
<organism evidence="12">
    <name type="scientific">Caenorhabditis elegans</name>
    <dbReference type="NCBI Taxonomy" id="6239"/>
    <lineage>
        <taxon>Eukaryota</taxon>
        <taxon>Metazoa</taxon>
        <taxon>Ecdysozoa</taxon>
        <taxon>Nematoda</taxon>
        <taxon>Chromadorea</taxon>
        <taxon>Rhabditida</taxon>
        <taxon>Rhabditina</taxon>
        <taxon>Rhabditomorpha</taxon>
        <taxon>Rhabditoidea</taxon>
        <taxon>Rhabditidae</taxon>
        <taxon>Peloderinae</taxon>
        <taxon>Caenorhabditis</taxon>
    </lineage>
</organism>
<protein>
    <recommendedName>
        <fullName evidence="9">Cyclin-dependent-like kinase 5</fullName>
        <ecNumber evidence="5">2.7.11.1</ecNumber>
    </recommendedName>
    <alternativeName>
        <fullName evidence="9">Cell division protein kinase 5</fullName>
    </alternativeName>
</protein>
<accession>G5ECH7</accession>
<name>CDK5_CAEEL</name>
<comment type="function">
    <text evidence="3 4 5 6 7 8">Proline-directed serine/threonine-protein kinase which, in several motor neurons, promotes the polarized trafficking of synaptic vesicles and dense-core vesicles (DCV). In the ventral nerve cord, phosphorylates lin-10 and thereby prevents lin-10-mediated anterograde trafficking of the glutamate receptor glr-1 (PubMed:17671168, PubMed:21609829). Involved in the inhibition of glr-1 trafficking in hypoxic conditions (PubMed:22252129). In DA motor neurons but not in DB motor neurons, regulates axonal transport of synaptic vesicle precursors by inhibiting dynein-mediated retrograde transport (PubMed:20510931). Regulates the trafficking of dense-core vesicles in DA and DB motor neurons by promoting anterograde trafficking to the axon and preventing dynein-dependent trafficking to the dendrite (PubMed:22699897). May regulate these processes in association with cdka-1/p35 (PubMed:17671168, PubMed:20510931). Activity may be regulated by cyy-1 (PubMed:20510931). Involved in synapse formation during DD motor neuron remodeling by regulating transport of disassembled synaptic material to the new synaptic sites probably by activating the motor protein unc-104/kinesin-3 (PubMed:21609829). Regulates microtubule polarity in the dendrite of DB motor neurons (PubMed:22699897). May also play a role in GABAergic synaptic vesicle localization in the ventral nerve cord (PubMed:16996038).</text>
</comment>
<comment type="catalytic activity">
    <reaction evidence="5">
        <text>L-seryl-[protein] + ATP = O-phospho-L-seryl-[protein] + ADP + H(+)</text>
        <dbReference type="Rhea" id="RHEA:17989"/>
        <dbReference type="Rhea" id="RHEA-COMP:9863"/>
        <dbReference type="Rhea" id="RHEA-COMP:11604"/>
        <dbReference type="ChEBI" id="CHEBI:15378"/>
        <dbReference type="ChEBI" id="CHEBI:29999"/>
        <dbReference type="ChEBI" id="CHEBI:30616"/>
        <dbReference type="ChEBI" id="CHEBI:83421"/>
        <dbReference type="ChEBI" id="CHEBI:456216"/>
        <dbReference type="EC" id="2.7.11.1"/>
    </reaction>
</comment>
<comment type="catalytic activity">
    <reaction evidence="5">
        <text>L-threonyl-[protein] + ATP = O-phospho-L-threonyl-[protein] + ADP + H(+)</text>
        <dbReference type="Rhea" id="RHEA:46608"/>
        <dbReference type="Rhea" id="RHEA-COMP:11060"/>
        <dbReference type="Rhea" id="RHEA-COMP:11605"/>
        <dbReference type="ChEBI" id="CHEBI:15378"/>
        <dbReference type="ChEBI" id="CHEBI:30013"/>
        <dbReference type="ChEBI" id="CHEBI:30616"/>
        <dbReference type="ChEBI" id="CHEBI:61977"/>
        <dbReference type="ChEBI" id="CHEBI:456216"/>
        <dbReference type="EC" id="2.7.11.1"/>
    </reaction>
</comment>
<comment type="cofactor">
    <cofactor evidence="5">
        <name>Mg(2+)</name>
        <dbReference type="ChEBI" id="CHEBI:18420"/>
    </cofactor>
    <text evidence="1">Binds 2 Mg(2+) ions.</text>
</comment>
<comment type="subunit">
    <text evidence="10">Heterodimer composed of a catalytic subunit cdk-5 and a regulatory subunit cdka-1. Interaction with cdka-1 is required for cdk-5 activation.</text>
</comment>
<comment type="subcellular location">
    <subcellularLocation>
        <location evidence="5">Cytoplasm</location>
    </subcellularLocation>
    <subcellularLocation>
        <location evidence="5">Cell projection</location>
        <location evidence="5">Dendrite</location>
    </subcellularLocation>
    <text evidence="5">Localizes predominantly to presynaptic sites and in dendrites as faint puncta.</text>
</comment>
<comment type="disruption phenotype">
    <text evidence="3 4 6 8">Several glr-1-dependent behaviors are affected including an absence of backward locomotion after nose-touching stimuli and a reduction in reverse locomotion (PubMed:17671168). In L4 mutants, incomplete elimination of ventral rab-3-positive synaptic vesicles associated with a delay in the formation of dorsal rab-3-positive synaptic vesicles in DD motor neurons. Normal formation of ventral synapses in DD motor neurons at the L1 stage (PubMed:21609829). In addition, mutants have an increase in anterograde dense-core vesicle trafficking and in the number of plus-end-out microtubules in DB motor neuron dendrites (PubMed:22699897). Reduced sensitivity to the acetylcholine esterase inhibitor aldicarb (PubMed:22699897). RNAi-mediated knockdown results in an abnormal distribution of GABAergic synaptic vesicles at synaptic termini of the ventral nerve cord (PubMed:16996038). RNAi-mediated knockdown in combination with exposure to pentylenetetrazole, a GABA antagonist that induces seizures, results in an increased convulsion incidence as compared to wild-type animals (PubMed:16996038).</text>
</comment>
<comment type="similarity">
    <text evidence="9">Belongs to the protein kinase superfamily. CMGC Ser/Thr protein kinase family. CDC2/CDKX subfamily.</text>
</comment>
<feature type="chain" id="PRO_0000433389" description="Cyclin-dependent-like kinase 5" evidence="9">
    <location>
        <begin position="1"/>
        <end position="292"/>
    </location>
</feature>
<feature type="domain" description="Protein kinase" evidence="2">
    <location>
        <begin position="4"/>
        <end position="286"/>
    </location>
</feature>
<feature type="active site" description="Proton acceptor" evidence="2">
    <location>
        <position position="126"/>
    </location>
</feature>
<feature type="binding site" evidence="2">
    <location>
        <begin position="10"/>
        <end position="18"/>
    </location>
    <ligand>
        <name>ATP</name>
        <dbReference type="ChEBI" id="CHEBI:30616"/>
    </ligand>
</feature>
<feature type="binding site" evidence="2">
    <location>
        <position position="33"/>
    </location>
    <ligand>
        <name>ATP</name>
        <dbReference type="ChEBI" id="CHEBI:30616"/>
    </ligand>
</feature>
<feature type="binding site" evidence="1">
    <location>
        <position position="131"/>
    </location>
    <ligand>
        <name>Mg(2+)</name>
        <dbReference type="ChEBI" id="CHEBI:18420"/>
    </ligand>
</feature>
<feature type="binding site" evidence="1">
    <location>
        <position position="144"/>
    </location>
    <ligand>
        <name>Mg(2+)</name>
        <dbReference type="ChEBI" id="CHEBI:18420"/>
    </ligand>
</feature>
<feature type="mutagenesis site" description="Loss of activity. Decrease in glr-1 synaptic localization." evidence="4">
    <original>K</original>
    <variation>T</variation>
    <location>
        <position position="33"/>
    </location>
</feature>
<feature type="mutagenesis site" description="Loss of activity. Decrease in glr-1 synaptic localization. Loss of polarized trafficking of dense-core vesicles in DB motor neurons." evidence="4 8">
    <original>D</original>
    <variation>N</variation>
    <location>
        <position position="144"/>
    </location>
</feature>
<dbReference type="EC" id="2.7.11.1" evidence="5"/>
<dbReference type="EMBL" id="AF129111">
    <property type="protein sequence ID" value="AAD37121.1"/>
    <property type="molecule type" value="mRNA"/>
</dbReference>
<dbReference type="EMBL" id="Z82059">
    <property type="protein sequence ID" value="CAB04875.1"/>
    <property type="molecule type" value="Genomic_DNA"/>
</dbReference>
<dbReference type="PIR" id="T25374">
    <property type="entry name" value="T25374"/>
</dbReference>
<dbReference type="RefSeq" id="NP_499783.1">
    <property type="nucleotide sequence ID" value="NM_067382.9"/>
</dbReference>
<dbReference type="SMR" id="G5ECH7"/>
<dbReference type="ComplexPortal" id="CPX-4322">
    <property type="entry name" value="Cyclin-dependent protein kinase 5 holoenzyme complex"/>
</dbReference>
<dbReference type="FunCoup" id="G5ECH7">
    <property type="interactions" value="2059"/>
</dbReference>
<dbReference type="IntAct" id="G5ECH7">
    <property type="interactions" value="1"/>
</dbReference>
<dbReference type="STRING" id="6239.T27E9.3.1"/>
<dbReference type="PaxDb" id="6239-T27E9.3"/>
<dbReference type="PeptideAtlas" id="G5ECH7"/>
<dbReference type="EnsemblMetazoa" id="T27E9.3.1">
    <property type="protein sequence ID" value="T27E9.3.1"/>
    <property type="gene ID" value="WBGene00000407"/>
</dbReference>
<dbReference type="GeneID" id="176774"/>
<dbReference type="KEGG" id="cel:CELE_T27E9.3"/>
<dbReference type="AGR" id="WB:WBGene00000407"/>
<dbReference type="CTD" id="176774"/>
<dbReference type="WormBase" id="T27E9.3">
    <property type="protein sequence ID" value="CE21213"/>
    <property type="gene ID" value="WBGene00000407"/>
    <property type="gene designation" value="cdk-5"/>
</dbReference>
<dbReference type="eggNOG" id="KOG0662">
    <property type="taxonomic scope" value="Eukaryota"/>
</dbReference>
<dbReference type="GeneTree" id="ENSGT00940000153335"/>
<dbReference type="HOGENOM" id="CLU_000288_181_1_1"/>
<dbReference type="InParanoid" id="G5ECH7"/>
<dbReference type="OMA" id="NWQIFVP"/>
<dbReference type="OrthoDB" id="1732493at2759"/>
<dbReference type="PhylomeDB" id="G5ECH7"/>
<dbReference type="Reactome" id="R-CEL-399956">
    <property type="pathway name" value="CRMPs in Sema3A signaling"/>
</dbReference>
<dbReference type="SignaLink" id="G5ECH7"/>
<dbReference type="PRO" id="PR:G5ECH7"/>
<dbReference type="Proteomes" id="UP000001940">
    <property type="component" value="Chromosome III"/>
</dbReference>
<dbReference type="Bgee" id="WBGene00000407">
    <property type="expression patterns" value="Expressed in germ line (C elegans) and 4 other cell types or tissues"/>
</dbReference>
<dbReference type="GO" id="GO:0030424">
    <property type="term" value="C:axon"/>
    <property type="evidence" value="ECO:0000314"/>
    <property type="project" value="WormBase"/>
</dbReference>
<dbReference type="GO" id="GO:1904115">
    <property type="term" value="C:axon cytoplasm"/>
    <property type="evidence" value="ECO:0007669"/>
    <property type="project" value="GOC"/>
</dbReference>
<dbReference type="GO" id="GO:0005737">
    <property type="term" value="C:cytoplasm"/>
    <property type="evidence" value="ECO:0000318"/>
    <property type="project" value="GO_Central"/>
</dbReference>
<dbReference type="GO" id="GO:0030425">
    <property type="term" value="C:dendrite"/>
    <property type="evidence" value="ECO:0007669"/>
    <property type="project" value="UniProtKB-SubCell"/>
</dbReference>
<dbReference type="GO" id="GO:0005634">
    <property type="term" value="C:nucleus"/>
    <property type="evidence" value="ECO:0000318"/>
    <property type="project" value="GO_Central"/>
</dbReference>
<dbReference type="GO" id="GO:0016533">
    <property type="term" value="C:protein kinase 5 complex"/>
    <property type="evidence" value="ECO:0000303"/>
    <property type="project" value="ComplexPortal"/>
</dbReference>
<dbReference type="GO" id="GO:0045202">
    <property type="term" value="C:synapse"/>
    <property type="evidence" value="ECO:0000314"/>
    <property type="project" value="WormBase"/>
</dbReference>
<dbReference type="GO" id="GO:0005524">
    <property type="term" value="F:ATP binding"/>
    <property type="evidence" value="ECO:0007669"/>
    <property type="project" value="UniProtKB-KW"/>
</dbReference>
<dbReference type="GO" id="GO:0004693">
    <property type="term" value="F:cyclin-dependent protein serine/threonine kinase activity"/>
    <property type="evidence" value="ECO:0000318"/>
    <property type="project" value="GO_Central"/>
</dbReference>
<dbReference type="GO" id="GO:0046872">
    <property type="term" value="F:metal ion binding"/>
    <property type="evidence" value="ECO:0007669"/>
    <property type="project" value="UniProtKB-KW"/>
</dbReference>
<dbReference type="GO" id="GO:0004672">
    <property type="term" value="F:protein kinase activity"/>
    <property type="evidence" value="ECO:0000314"/>
    <property type="project" value="WormBase"/>
</dbReference>
<dbReference type="GO" id="GO:0106310">
    <property type="term" value="F:protein serine kinase activity"/>
    <property type="evidence" value="ECO:0007669"/>
    <property type="project" value="RHEA"/>
</dbReference>
<dbReference type="GO" id="GO:1990048">
    <property type="term" value="P:anterograde neuronal dense core vesicle transport"/>
    <property type="evidence" value="ECO:0000303"/>
    <property type="project" value="ComplexPortal"/>
</dbReference>
<dbReference type="GO" id="GO:0007409">
    <property type="term" value="P:axonogenesis"/>
    <property type="evidence" value="ECO:0000318"/>
    <property type="project" value="GO_Central"/>
</dbReference>
<dbReference type="GO" id="GO:0051301">
    <property type="term" value="P:cell division"/>
    <property type="evidence" value="ECO:0007669"/>
    <property type="project" value="UniProtKB-KW"/>
</dbReference>
<dbReference type="GO" id="GO:0007268">
    <property type="term" value="P:chemical synaptic transmission"/>
    <property type="evidence" value="ECO:0000315"/>
    <property type="project" value="UniProtKB"/>
</dbReference>
<dbReference type="GO" id="GO:0030951">
    <property type="term" value="P:establishment or maintenance of microtubule cytoskeleton polarity"/>
    <property type="evidence" value="ECO:0000315"/>
    <property type="project" value="UniProtKB"/>
</dbReference>
<dbReference type="GO" id="GO:1904810">
    <property type="term" value="P:negative regulation of dense core granule transport"/>
    <property type="evidence" value="ECO:0000315"/>
    <property type="project" value="UniProtKB"/>
</dbReference>
<dbReference type="GO" id="GO:0051402">
    <property type="term" value="P:neuron apoptotic process"/>
    <property type="evidence" value="ECO:0000318"/>
    <property type="project" value="GO_Central"/>
</dbReference>
<dbReference type="GO" id="GO:1904811">
    <property type="term" value="P:positive regulation of dense core granule transport"/>
    <property type="evidence" value="ECO:0000315"/>
    <property type="project" value="UniProtKB"/>
</dbReference>
<dbReference type="GO" id="GO:0051222">
    <property type="term" value="P:positive regulation of protein transport"/>
    <property type="evidence" value="ECO:0000316"/>
    <property type="project" value="UniProtKB"/>
</dbReference>
<dbReference type="GO" id="GO:0051965">
    <property type="term" value="P:positive regulation of synapse assembly"/>
    <property type="evidence" value="ECO:0000315"/>
    <property type="project" value="UniProtKB"/>
</dbReference>
<dbReference type="GO" id="GO:1901987">
    <property type="term" value="P:regulation of cell cycle phase transition"/>
    <property type="evidence" value="ECO:0000318"/>
    <property type="project" value="GO_Central"/>
</dbReference>
<dbReference type="GO" id="GO:0010468">
    <property type="term" value="P:regulation of gene expression"/>
    <property type="evidence" value="ECO:0000315"/>
    <property type="project" value="WormBase"/>
</dbReference>
<dbReference type="GO" id="GO:1904799">
    <property type="term" value="P:regulation of neuron remodeling"/>
    <property type="evidence" value="ECO:0000315"/>
    <property type="project" value="UniProtKB"/>
</dbReference>
<dbReference type="GO" id="GO:0032880">
    <property type="term" value="P:regulation of protein localization"/>
    <property type="evidence" value="ECO:0000315"/>
    <property type="project" value="WormBase"/>
</dbReference>
<dbReference type="GO" id="GO:1902803">
    <property type="term" value="P:regulation of synaptic vesicle transport"/>
    <property type="evidence" value="ECO:0000303"/>
    <property type="project" value="ComplexPortal"/>
</dbReference>
<dbReference type="GO" id="GO:2000331">
    <property type="term" value="P:regulation of terminal button organization"/>
    <property type="evidence" value="ECO:0000315"/>
    <property type="project" value="UniProtKB"/>
</dbReference>
<dbReference type="GO" id="GO:0048491">
    <property type="term" value="P:retrograde synaptic vesicle transport"/>
    <property type="evidence" value="ECO:0000303"/>
    <property type="project" value="ComplexPortal"/>
</dbReference>
<dbReference type="GO" id="GO:0051932">
    <property type="term" value="P:synaptic transmission, GABAergic"/>
    <property type="evidence" value="ECO:0000315"/>
    <property type="project" value="WormBase"/>
</dbReference>
<dbReference type="GO" id="GO:0048489">
    <property type="term" value="P:synaptic vesicle transport"/>
    <property type="evidence" value="ECO:0000315"/>
    <property type="project" value="WormBase"/>
</dbReference>
<dbReference type="CDD" id="cd07839">
    <property type="entry name" value="STKc_CDK5"/>
    <property type="match status" value="1"/>
</dbReference>
<dbReference type="FunFam" id="3.30.200.20:FF:000144">
    <property type="entry name" value="Cyclin-dependent kinase 5"/>
    <property type="match status" value="1"/>
</dbReference>
<dbReference type="FunFam" id="1.10.510.10:FF:000184">
    <property type="entry name" value="cyclin-dependent kinase 5 homolog"/>
    <property type="match status" value="1"/>
</dbReference>
<dbReference type="Gene3D" id="3.30.200.20">
    <property type="entry name" value="Phosphorylase Kinase, domain 1"/>
    <property type="match status" value="1"/>
</dbReference>
<dbReference type="Gene3D" id="1.10.510.10">
    <property type="entry name" value="Transferase(Phosphotransferase) domain 1"/>
    <property type="match status" value="1"/>
</dbReference>
<dbReference type="InterPro" id="IPR050108">
    <property type="entry name" value="CDK"/>
</dbReference>
<dbReference type="InterPro" id="IPR011009">
    <property type="entry name" value="Kinase-like_dom_sf"/>
</dbReference>
<dbReference type="InterPro" id="IPR000719">
    <property type="entry name" value="Prot_kinase_dom"/>
</dbReference>
<dbReference type="InterPro" id="IPR017441">
    <property type="entry name" value="Protein_kinase_ATP_BS"/>
</dbReference>
<dbReference type="InterPro" id="IPR008271">
    <property type="entry name" value="Ser/Thr_kinase_AS"/>
</dbReference>
<dbReference type="PANTHER" id="PTHR24056">
    <property type="entry name" value="CELL DIVISION PROTEIN KINASE"/>
    <property type="match status" value="1"/>
</dbReference>
<dbReference type="PANTHER" id="PTHR24056:SF46">
    <property type="entry name" value="CYCLIN-DEPENDENT KINASE 5"/>
    <property type="match status" value="1"/>
</dbReference>
<dbReference type="Pfam" id="PF00069">
    <property type="entry name" value="Pkinase"/>
    <property type="match status" value="1"/>
</dbReference>
<dbReference type="SMART" id="SM00220">
    <property type="entry name" value="S_TKc"/>
    <property type="match status" value="1"/>
</dbReference>
<dbReference type="SUPFAM" id="SSF56112">
    <property type="entry name" value="Protein kinase-like (PK-like)"/>
    <property type="match status" value="1"/>
</dbReference>
<dbReference type="PROSITE" id="PS00107">
    <property type="entry name" value="PROTEIN_KINASE_ATP"/>
    <property type="match status" value="1"/>
</dbReference>
<dbReference type="PROSITE" id="PS50011">
    <property type="entry name" value="PROTEIN_KINASE_DOM"/>
    <property type="match status" value="1"/>
</dbReference>
<dbReference type="PROSITE" id="PS00108">
    <property type="entry name" value="PROTEIN_KINASE_ST"/>
    <property type="match status" value="1"/>
</dbReference>
<sequence>MLNYDKMEKIGEGTYGTVFKARNKNSGEIVALKRVRLDDDDEGVPSSALREICILRELKHRNVVRLYDVVHSENKLTLVFEYCDQDLKKFFDSLNGYMDAQTARSLMLQLLRGLSFCHAHHVLHRDLKPQNLLINTNGTLKLADFGLARAFGVPVRCFSAEVVTLWYRPPDVLFGAKLYNTSIDMWSAGCIFAEISNAGRPLFPGADVDDQLKRIFKQLGSPSEDNWPSITQLPDYKPYPIYHPTLTWSQIVPNLNSRGRDLLQKLLVCNPAGRIDADAALRHAYFADTSDV</sequence>
<keyword id="KW-0067">ATP-binding</keyword>
<keyword id="KW-0131">Cell cycle</keyword>
<keyword id="KW-0132">Cell division</keyword>
<keyword id="KW-0966">Cell projection</keyword>
<keyword id="KW-0963">Cytoplasm</keyword>
<keyword id="KW-0418">Kinase</keyword>
<keyword id="KW-0460">Magnesium</keyword>
<keyword id="KW-0479">Metal-binding</keyword>
<keyword id="KW-0524">Neurogenesis</keyword>
<keyword id="KW-0547">Nucleotide-binding</keyword>
<keyword id="KW-1185">Reference proteome</keyword>
<keyword id="KW-0723">Serine/threonine-protein kinase</keyword>
<keyword id="KW-0808">Transferase</keyword>